<keyword id="KW-0002">3D-structure</keyword>
<keyword id="KW-0040">ANK repeat</keyword>
<keyword id="KW-0150">Chloroplast</keyword>
<keyword id="KW-0472">Membrane</keyword>
<keyword id="KW-0934">Plastid</keyword>
<keyword id="KW-0653">Protein transport</keyword>
<keyword id="KW-1185">Reference proteome</keyword>
<keyword id="KW-0793">Thylakoid</keyword>
<keyword id="KW-0809">Transit peptide</keyword>
<keyword id="KW-0813">Transport</keyword>
<sequence>MASSSISFSCAPSLATSLFSTTSSSPRLLSSRFLGTRNLKLRIRPARLGPSNGSRTTCWFKFGKNGVDAENAGIYGSQSRDDFDRDDVEQYFNYMGMLAVEGTYSKMEALLNLNIHPVDILLMLAATEGDRPKIEELLKAGADYSVKDADGRTAIDRANSEEIRDLILGYSTQKA</sequence>
<feature type="transit peptide" description="Chloroplast" evidence="1">
    <location>
        <begin position="1"/>
        <end position="68"/>
    </location>
</feature>
<feature type="chain" id="PRO_0000413432" description="Protein LHCP TRANSLOCATION DEFECT">
    <location>
        <begin position="69"/>
        <end position="175"/>
    </location>
</feature>
<feature type="repeat" description="ANK">
    <location>
        <begin position="117"/>
        <end position="149"/>
    </location>
</feature>
<organism>
    <name type="scientific">Arabidopsis thaliana</name>
    <name type="common">Mouse-ear cress</name>
    <dbReference type="NCBI Taxonomy" id="3702"/>
    <lineage>
        <taxon>Eukaryota</taxon>
        <taxon>Viridiplantae</taxon>
        <taxon>Streptophyta</taxon>
        <taxon>Embryophyta</taxon>
        <taxon>Tracheophyta</taxon>
        <taxon>Spermatophyta</taxon>
        <taxon>Magnoliopsida</taxon>
        <taxon>eudicotyledons</taxon>
        <taxon>Gunneridae</taxon>
        <taxon>Pentapetalae</taxon>
        <taxon>rosids</taxon>
        <taxon>malvids</taxon>
        <taxon>Brassicales</taxon>
        <taxon>Brassicaceae</taxon>
        <taxon>Camelineae</taxon>
        <taxon>Arabidopsis</taxon>
    </lineage>
</organism>
<name>LTD_ARATH</name>
<protein>
    <recommendedName>
        <fullName>Protein LHCP TRANSLOCATION DEFECT</fullName>
    </recommendedName>
    <alternativeName>
        <fullName>Protein GRANA-DEFICIENT CHLOROPLAST 1</fullName>
    </alternativeName>
</protein>
<evidence type="ECO:0000255" key="1"/>
<evidence type="ECO:0000269" key="2">
    <source>
    </source>
</evidence>
<evidence type="ECO:0000269" key="3">
    <source>
    </source>
</evidence>
<evidence type="ECO:0000305" key="4"/>
<reference key="1">
    <citation type="journal article" date="2011" name="Plant Physiol.">
        <title>The GDC1 gene encodes a novel ankyrin domain-containing protein that is essential for grana formation in Arabidopsis.</title>
        <authorList>
            <person name="Cui Y.L."/>
            <person name="Jia Q.S."/>
            <person name="Yin Q.Q."/>
            <person name="Lin G.N."/>
            <person name="Kong M.M."/>
            <person name="Yang Z.N."/>
        </authorList>
    </citation>
    <scope>NUCLEOTIDE SEQUENCE [GENOMIC DNA / MRNA]</scope>
    <scope>FUNCTION</scope>
    <scope>DISRUPTION PHENOTYPE</scope>
    <scope>SUBCELLULAR LOCATION</scope>
    <scope>TISSUE SPECIFICITY</scope>
    <scope>INDUCTION BY LIGHT</scope>
</reference>
<reference key="2">
    <citation type="journal article" date="2000" name="Nature">
        <title>Sequence and analysis of chromosome 1 of the plant Arabidopsis thaliana.</title>
        <authorList>
            <person name="Theologis A."/>
            <person name="Ecker J.R."/>
            <person name="Palm C.J."/>
            <person name="Federspiel N.A."/>
            <person name="Kaul S."/>
            <person name="White O."/>
            <person name="Alonso J."/>
            <person name="Altafi H."/>
            <person name="Araujo R."/>
            <person name="Bowman C.L."/>
            <person name="Brooks S.Y."/>
            <person name="Buehler E."/>
            <person name="Chan A."/>
            <person name="Chao Q."/>
            <person name="Chen H."/>
            <person name="Cheuk R.F."/>
            <person name="Chin C.W."/>
            <person name="Chung M.K."/>
            <person name="Conn L."/>
            <person name="Conway A.B."/>
            <person name="Conway A.R."/>
            <person name="Creasy T.H."/>
            <person name="Dewar K."/>
            <person name="Dunn P."/>
            <person name="Etgu P."/>
            <person name="Feldblyum T.V."/>
            <person name="Feng J.-D."/>
            <person name="Fong B."/>
            <person name="Fujii C.Y."/>
            <person name="Gill J.E."/>
            <person name="Goldsmith A.D."/>
            <person name="Haas B."/>
            <person name="Hansen N.F."/>
            <person name="Hughes B."/>
            <person name="Huizar L."/>
            <person name="Hunter J.L."/>
            <person name="Jenkins J."/>
            <person name="Johnson-Hopson C."/>
            <person name="Khan S."/>
            <person name="Khaykin E."/>
            <person name="Kim C.J."/>
            <person name="Koo H.L."/>
            <person name="Kremenetskaia I."/>
            <person name="Kurtz D.B."/>
            <person name="Kwan A."/>
            <person name="Lam B."/>
            <person name="Langin-Hooper S."/>
            <person name="Lee A."/>
            <person name="Lee J.M."/>
            <person name="Lenz C.A."/>
            <person name="Li J.H."/>
            <person name="Li Y.-P."/>
            <person name="Lin X."/>
            <person name="Liu S.X."/>
            <person name="Liu Z.A."/>
            <person name="Luros J.S."/>
            <person name="Maiti R."/>
            <person name="Marziali A."/>
            <person name="Militscher J."/>
            <person name="Miranda M."/>
            <person name="Nguyen M."/>
            <person name="Nierman W.C."/>
            <person name="Osborne B.I."/>
            <person name="Pai G."/>
            <person name="Peterson J."/>
            <person name="Pham P.K."/>
            <person name="Rizzo M."/>
            <person name="Rooney T."/>
            <person name="Rowley D."/>
            <person name="Sakano H."/>
            <person name="Salzberg S.L."/>
            <person name="Schwartz J.R."/>
            <person name="Shinn P."/>
            <person name="Southwick A.M."/>
            <person name="Sun H."/>
            <person name="Tallon L.J."/>
            <person name="Tambunga G."/>
            <person name="Toriumi M.J."/>
            <person name="Town C.D."/>
            <person name="Utterback T."/>
            <person name="Van Aken S."/>
            <person name="Vaysberg M."/>
            <person name="Vysotskaia V.S."/>
            <person name="Walker M."/>
            <person name="Wu D."/>
            <person name="Yu G."/>
            <person name="Fraser C.M."/>
            <person name="Venter J.C."/>
            <person name="Davis R.W."/>
        </authorList>
    </citation>
    <scope>NUCLEOTIDE SEQUENCE [LARGE SCALE GENOMIC DNA]</scope>
    <source>
        <strain>cv. Columbia</strain>
    </source>
</reference>
<reference key="3">
    <citation type="journal article" date="2017" name="Plant J.">
        <title>Araport11: a complete reannotation of the Arabidopsis thaliana reference genome.</title>
        <authorList>
            <person name="Cheng C.Y."/>
            <person name="Krishnakumar V."/>
            <person name="Chan A.P."/>
            <person name="Thibaud-Nissen F."/>
            <person name="Schobel S."/>
            <person name="Town C.D."/>
        </authorList>
    </citation>
    <scope>GENOME REANNOTATION</scope>
    <source>
        <strain>cv. Columbia</strain>
    </source>
</reference>
<reference key="4">
    <citation type="journal article" date="2003" name="Science">
        <title>Empirical analysis of transcriptional activity in the Arabidopsis genome.</title>
        <authorList>
            <person name="Yamada K."/>
            <person name="Lim J."/>
            <person name="Dale J.M."/>
            <person name="Chen H."/>
            <person name="Shinn P."/>
            <person name="Palm C.J."/>
            <person name="Southwick A.M."/>
            <person name="Wu H.C."/>
            <person name="Kim C.J."/>
            <person name="Nguyen M."/>
            <person name="Pham P.K."/>
            <person name="Cheuk R.F."/>
            <person name="Karlin-Newmann G."/>
            <person name="Liu S.X."/>
            <person name="Lam B."/>
            <person name="Sakano H."/>
            <person name="Wu T."/>
            <person name="Yu G."/>
            <person name="Miranda M."/>
            <person name="Quach H.L."/>
            <person name="Tripp M."/>
            <person name="Chang C.H."/>
            <person name="Lee J.M."/>
            <person name="Toriumi M.J."/>
            <person name="Chan M.M."/>
            <person name="Tang C.C."/>
            <person name="Onodera C.S."/>
            <person name="Deng J.M."/>
            <person name="Akiyama K."/>
            <person name="Ansari Y."/>
            <person name="Arakawa T."/>
            <person name="Banh J."/>
            <person name="Banno F."/>
            <person name="Bowser L."/>
            <person name="Brooks S.Y."/>
            <person name="Carninci P."/>
            <person name="Chao Q."/>
            <person name="Choy N."/>
            <person name="Enju A."/>
            <person name="Goldsmith A.D."/>
            <person name="Gurjal M."/>
            <person name="Hansen N.F."/>
            <person name="Hayashizaki Y."/>
            <person name="Johnson-Hopson C."/>
            <person name="Hsuan V.W."/>
            <person name="Iida K."/>
            <person name="Karnes M."/>
            <person name="Khan S."/>
            <person name="Koesema E."/>
            <person name="Ishida J."/>
            <person name="Jiang P.X."/>
            <person name="Jones T."/>
            <person name="Kawai J."/>
            <person name="Kamiya A."/>
            <person name="Meyers C."/>
            <person name="Nakajima M."/>
            <person name="Narusaka M."/>
            <person name="Seki M."/>
            <person name="Sakurai T."/>
            <person name="Satou M."/>
            <person name="Tamse R."/>
            <person name="Vaysberg M."/>
            <person name="Wallender E.K."/>
            <person name="Wong C."/>
            <person name="Yamamura Y."/>
            <person name="Yuan S."/>
            <person name="Shinozaki K."/>
            <person name="Davis R.W."/>
            <person name="Theologis A."/>
            <person name="Ecker J.R."/>
        </authorList>
    </citation>
    <scope>NUCLEOTIDE SEQUENCE [LARGE SCALE MRNA]</scope>
    <source>
        <strain>cv. Columbia</strain>
    </source>
</reference>
<reference key="5">
    <citation type="submission" date="2002-03" db="EMBL/GenBank/DDBJ databases">
        <title>Full-length cDNA from Arabidopsis thaliana.</title>
        <authorList>
            <person name="Brover V.V."/>
            <person name="Troukhan M.E."/>
            <person name="Alexandrov N.A."/>
            <person name="Lu Y.-P."/>
            <person name="Flavell R.B."/>
            <person name="Feldmann K.A."/>
        </authorList>
    </citation>
    <scope>NUCLEOTIDE SEQUENCE [LARGE SCALE MRNA]</scope>
</reference>
<reference key="6">
    <citation type="journal article" date="2011" name="Nat. Commun.">
        <title>LTD is a protein required for sorting light-harvesting chlorophyll-binding proteins to the chloroplast SRP pathway.</title>
        <authorList>
            <person name="Ouyang M."/>
            <person name="Li X."/>
            <person name="Ma J."/>
            <person name="Chi W."/>
            <person name="Xiao J."/>
            <person name="Zou M."/>
            <person name="Chen F."/>
            <person name="Lu C."/>
            <person name="Zhang L."/>
        </authorList>
    </citation>
    <scope>FUNCTION</scope>
    <scope>DISRUPTION PHENOTYPE</scope>
    <scope>SUBCELLULAR LOCATION</scope>
    <scope>INTERACTION WITH CAO/CPSRP43; LHCP; TIC40 AND TIC110</scope>
</reference>
<accession>Q8VY88</accession>
<accession>Q9C6J0</accession>
<gene>
    <name type="primary">LTD</name>
    <name type="synonym">GDC1</name>
    <name type="ordered locus">At1g50900</name>
    <name type="ORF">F8A12.12</name>
</gene>
<proteinExistence type="evidence at protein level"/>
<comment type="function">
    <text evidence="2 3">Involved in the import of light-harvesting complex proteins (LHCP) and subsequent routing of these proteins to the chloroplast signal recognition particle (SRP) pathway.</text>
</comment>
<comment type="subunit">
    <text evidence="3">Interacts with CAO/cpSRP43, but is not a component of the transit complex. Interacts with LHCP (via T14 domain), TIC40 and TIC110.</text>
</comment>
<comment type="subcellular location">
    <subcellularLocation>
        <location>Plastid</location>
        <location>Chloroplast thylakoid membrane</location>
        <topology>Peripheral membrane protein</topology>
    </subcellularLocation>
    <subcellularLocation>
        <location>Plastid</location>
        <location>Chloroplast envelope</location>
    </subcellularLocation>
    <subcellularLocation>
        <location>Plastid</location>
        <location>Chloroplast stroma</location>
    </subcellularLocation>
</comment>
<comment type="tissue specificity">
    <text evidence="2">Highly expressed in leaves and seedlings. Detected in roots, but not in germinating seeds.</text>
</comment>
<comment type="induction">
    <text evidence="2">Up-regulated by light.</text>
</comment>
<comment type="disruption phenotype">
    <text evidence="2 3">Not able to grow photoautotrophically in soil. Pale green, slow growth and no bolting. No appressed grana in chloroplasts.</text>
</comment>
<comment type="sequence caution" evidence="4">
    <conflict type="erroneous gene model prediction">
        <sequence resource="EMBL-CDS" id="AAG50930"/>
    </conflict>
</comment>
<dbReference type="EMBL" id="AC079284">
    <property type="protein sequence ID" value="AAG50930.1"/>
    <property type="status" value="ALT_SEQ"/>
    <property type="molecule type" value="Genomic_DNA"/>
</dbReference>
<dbReference type="EMBL" id="CP002684">
    <property type="protein sequence ID" value="AEE32599.1"/>
    <property type="molecule type" value="Genomic_DNA"/>
</dbReference>
<dbReference type="EMBL" id="AY072348">
    <property type="protein sequence ID" value="AAL61955.1"/>
    <property type="molecule type" value="mRNA"/>
</dbReference>
<dbReference type="EMBL" id="AY114573">
    <property type="protein sequence ID" value="AAM47892.1"/>
    <property type="molecule type" value="mRNA"/>
</dbReference>
<dbReference type="EMBL" id="AY085852">
    <property type="protein sequence ID" value="AAM63065.1"/>
    <property type="molecule type" value="mRNA"/>
</dbReference>
<dbReference type="PIR" id="A96546">
    <property type="entry name" value="A96546"/>
</dbReference>
<dbReference type="RefSeq" id="NP_564580.1">
    <property type="nucleotide sequence ID" value="NM_103970.3"/>
</dbReference>
<dbReference type="PDB" id="8K48">
    <property type="method" value="X-ray"/>
    <property type="resolution" value="2.10 A"/>
    <property type="chains" value="A/B/C/D=69-175"/>
</dbReference>
<dbReference type="PDBsum" id="8K48"/>
<dbReference type="SMR" id="Q8VY88"/>
<dbReference type="BioGRID" id="26737">
    <property type="interactions" value="2"/>
</dbReference>
<dbReference type="FunCoup" id="Q8VY88">
    <property type="interactions" value="1099"/>
</dbReference>
<dbReference type="IntAct" id="Q8VY88">
    <property type="interactions" value="2"/>
</dbReference>
<dbReference type="STRING" id="3702.Q8VY88"/>
<dbReference type="TCDB" id="3.A.9.1.2">
    <property type="family name" value="the chloroplast envelope protein translocase (cept or tic-toc) family"/>
</dbReference>
<dbReference type="iPTMnet" id="Q8VY88"/>
<dbReference type="PaxDb" id="3702-AT1G50900.1"/>
<dbReference type="ProteomicsDB" id="238504"/>
<dbReference type="EnsemblPlants" id="AT1G50900.1">
    <property type="protein sequence ID" value="AT1G50900.1"/>
    <property type="gene ID" value="AT1G50900"/>
</dbReference>
<dbReference type="GeneID" id="841512"/>
<dbReference type="Gramene" id="AT1G50900.1">
    <property type="protein sequence ID" value="AT1G50900.1"/>
    <property type="gene ID" value="AT1G50900"/>
</dbReference>
<dbReference type="KEGG" id="ath:AT1G50900"/>
<dbReference type="Araport" id="AT1G50900"/>
<dbReference type="TAIR" id="AT1G50900">
    <property type="gene designation" value="GDC1"/>
</dbReference>
<dbReference type="eggNOG" id="ENOG502RYRG">
    <property type="taxonomic scope" value="Eukaryota"/>
</dbReference>
<dbReference type="HOGENOM" id="CLU_132294_0_0_1"/>
<dbReference type="InParanoid" id="Q8VY88"/>
<dbReference type="OMA" id="GPTCFFK"/>
<dbReference type="OrthoDB" id="539213at2759"/>
<dbReference type="PRO" id="PR:Q8VY88"/>
<dbReference type="Proteomes" id="UP000006548">
    <property type="component" value="Chromosome 1"/>
</dbReference>
<dbReference type="ExpressionAtlas" id="Q8VY88">
    <property type="expression patterns" value="baseline and differential"/>
</dbReference>
<dbReference type="GO" id="GO:0009507">
    <property type="term" value="C:chloroplast"/>
    <property type="evidence" value="ECO:0000314"/>
    <property type="project" value="TAIR"/>
</dbReference>
<dbReference type="GO" id="GO:0009941">
    <property type="term" value="C:chloroplast envelope"/>
    <property type="evidence" value="ECO:0000314"/>
    <property type="project" value="UniProtKB"/>
</dbReference>
<dbReference type="GO" id="GO:0009570">
    <property type="term" value="C:chloroplast stroma"/>
    <property type="evidence" value="ECO:0000314"/>
    <property type="project" value="UniProtKB"/>
</dbReference>
<dbReference type="GO" id="GO:0009535">
    <property type="term" value="C:chloroplast thylakoid membrane"/>
    <property type="evidence" value="ECO:0007669"/>
    <property type="project" value="UniProtKB-SubCell"/>
</dbReference>
<dbReference type="GO" id="GO:0090391">
    <property type="term" value="P:granum assembly"/>
    <property type="evidence" value="ECO:0000315"/>
    <property type="project" value="TAIR"/>
</dbReference>
<dbReference type="GO" id="GO:0006886">
    <property type="term" value="P:intracellular protein transport"/>
    <property type="evidence" value="ECO:0000314"/>
    <property type="project" value="UniProtKB"/>
</dbReference>
<dbReference type="FunFam" id="1.25.40.20:FF:000251">
    <property type="entry name" value="Protein LHCP TRANSLOCATION DEFECT"/>
    <property type="match status" value="1"/>
</dbReference>
<dbReference type="Gene3D" id="1.25.40.20">
    <property type="entry name" value="Ankyrin repeat-containing domain"/>
    <property type="match status" value="1"/>
</dbReference>
<dbReference type="InterPro" id="IPR002110">
    <property type="entry name" value="Ankyrin_rpt"/>
</dbReference>
<dbReference type="InterPro" id="IPR036770">
    <property type="entry name" value="Ankyrin_rpt-contain_sf"/>
</dbReference>
<dbReference type="InterPro" id="IPR044242">
    <property type="entry name" value="LTD-like"/>
</dbReference>
<dbReference type="PANTHER" id="PTHR47317">
    <property type="entry name" value="PROTEIN LHCP TRANSLOCATION DEFECT"/>
    <property type="match status" value="1"/>
</dbReference>
<dbReference type="PANTHER" id="PTHR47317:SF1">
    <property type="entry name" value="PROTEIN LHCP TRANSLOCATION DEFECT"/>
    <property type="match status" value="1"/>
</dbReference>
<dbReference type="SUPFAM" id="SSF48403">
    <property type="entry name" value="Ankyrin repeat"/>
    <property type="match status" value="1"/>
</dbReference>
<dbReference type="PROSITE" id="PS50297">
    <property type="entry name" value="ANK_REP_REGION"/>
    <property type="match status" value="1"/>
</dbReference>
<dbReference type="PROSITE" id="PS50088">
    <property type="entry name" value="ANK_REPEAT"/>
    <property type="match status" value="1"/>
</dbReference>